<keyword id="KW-0067">ATP-binding</keyword>
<keyword id="KW-0963">Cytoplasm</keyword>
<keyword id="KW-0436">Ligase</keyword>
<keyword id="KW-0547">Nucleotide-binding</keyword>
<keyword id="KW-0658">Purine biosynthesis</keyword>
<keyword id="KW-1185">Reference proteome</keyword>
<comment type="function">
    <text evidence="2">Part of the phosphoribosylformylglycinamidine synthase complex involved in the purines biosynthetic pathway. Catalyzes the ATP-dependent conversion of formylglycinamide ribonucleotide (FGAR) and glutamine to yield formylglycinamidine ribonucleotide (FGAM) and glutamate. The FGAM synthase complex is composed of three subunits. PurQ produces an ammonia molecule by converting glutamine to glutamate. PurL transfers the ammonia molecule to FGAR to form FGAM in an ATP-dependent manner. PurS interacts with PurQ and PurL and is thought to assist in the transfer of the ammonia molecule from PurQ to PurL.</text>
</comment>
<comment type="catalytic activity">
    <reaction evidence="2">
        <text>N(2)-formyl-N(1)-(5-phospho-beta-D-ribosyl)glycinamide + L-glutamine + ATP + H2O = 2-formamido-N(1)-(5-O-phospho-beta-D-ribosyl)acetamidine + L-glutamate + ADP + phosphate + H(+)</text>
        <dbReference type="Rhea" id="RHEA:17129"/>
        <dbReference type="ChEBI" id="CHEBI:15377"/>
        <dbReference type="ChEBI" id="CHEBI:15378"/>
        <dbReference type="ChEBI" id="CHEBI:29985"/>
        <dbReference type="ChEBI" id="CHEBI:30616"/>
        <dbReference type="ChEBI" id="CHEBI:43474"/>
        <dbReference type="ChEBI" id="CHEBI:58359"/>
        <dbReference type="ChEBI" id="CHEBI:147286"/>
        <dbReference type="ChEBI" id="CHEBI:147287"/>
        <dbReference type="ChEBI" id="CHEBI:456216"/>
        <dbReference type="EC" id="6.3.5.3"/>
    </reaction>
</comment>
<comment type="pathway">
    <text evidence="2">Purine metabolism; IMP biosynthesis via de novo pathway; 5-amino-1-(5-phospho-D-ribosyl)imidazole from N(2)-formyl-N(1)-(5-phospho-D-ribosyl)glycinamide: step 1/2.</text>
</comment>
<comment type="subunit">
    <text evidence="1">Homodimer. Part of the FGAM synthase complex composed of 1 PurL, 1 PurQ and 2 PurS subunits (By similarity).</text>
</comment>
<comment type="subcellular location">
    <subcellularLocation>
        <location evidence="2">Cytoplasm</location>
    </subcellularLocation>
</comment>
<comment type="similarity">
    <text evidence="2">Belongs to the PurS family.</text>
</comment>
<dbReference type="EC" id="6.3.5.3" evidence="2"/>
<dbReference type="EMBL" id="Z95151">
    <property type="protein sequence ID" value="CAB08428.1"/>
    <property type="molecule type" value="Genomic_DNA"/>
</dbReference>
<dbReference type="EMBL" id="AL583924">
    <property type="protein sequence ID" value="CAC31175.1"/>
    <property type="molecule type" value="Genomic_DNA"/>
</dbReference>
<dbReference type="PIR" id="G87186">
    <property type="entry name" value="G87186"/>
</dbReference>
<dbReference type="RefSeq" id="NP_302454.1">
    <property type="nucleotide sequence ID" value="NC_002677.1"/>
</dbReference>
<dbReference type="SMR" id="O05755"/>
<dbReference type="STRING" id="272631.gene:17576077"/>
<dbReference type="KEGG" id="mle:ML2219A"/>
<dbReference type="PATRIC" id="fig|272631.5.peg.4205"/>
<dbReference type="Leproma" id="ML2219A"/>
<dbReference type="eggNOG" id="COG1828">
    <property type="taxonomic scope" value="Bacteria"/>
</dbReference>
<dbReference type="HOGENOM" id="CLU_164833_1_0_11"/>
<dbReference type="OrthoDB" id="3479567at2"/>
<dbReference type="UniPathway" id="UPA00074">
    <property type="reaction ID" value="UER00128"/>
</dbReference>
<dbReference type="Proteomes" id="UP000000806">
    <property type="component" value="Chromosome"/>
</dbReference>
<dbReference type="GO" id="GO:0005737">
    <property type="term" value="C:cytoplasm"/>
    <property type="evidence" value="ECO:0007669"/>
    <property type="project" value="UniProtKB-SubCell"/>
</dbReference>
<dbReference type="GO" id="GO:0005524">
    <property type="term" value="F:ATP binding"/>
    <property type="evidence" value="ECO:0007669"/>
    <property type="project" value="UniProtKB-UniRule"/>
</dbReference>
<dbReference type="GO" id="GO:0004642">
    <property type="term" value="F:phosphoribosylformylglycinamidine synthase activity"/>
    <property type="evidence" value="ECO:0007669"/>
    <property type="project" value="UniProtKB-UniRule"/>
</dbReference>
<dbReference type="GO" id="GO:0006189">
    <property type="term" value="P:'de novo' IMP biosynthetic process"/>
    <property type="evidence" value="ECO:0007669"/>
    <property type="project" value="UniProtKB-UniRule"/>
</dbReference>
<dbReference type="Gene3D" id="3.30.1280.10">
    <property type="entry name" value="Phosphoribosylformylglycinamidine synthase subunit PurS"/>
    <property type="match status" value="1"/>
</dbReference>
<dbReference type="HAMAP" id="MF_01926">
    <property type="entry name" value="PurS"/>
    <property type="match status" value="1"/>
</dbReference>
<dbReference type="InterPro" id="IPR003850">
    <property type="entry name" value="PurS"/>
</dbReference>
<dbReference type="InterPro" id="IPR036604">
    <property type="entry name" value="PurS-like_sf"/>
</dbReference>
<dbReference type="NCBIfam" id="TIGR00302">
    <property type="entry name" value="phosphoribosylformylglycinamidine synthase subunit PurS"/>
    <property type="match status" value="1"/>
</dbReference>
<dbReference type="NCBIfam" id="NF004630">
    <property type="entry name" value="PRK05974.1"/>
    <property type="match status" value="1"/>
</dbReference>
<dbReference type="PANTHER" id="PTHR34696">
    <property type="entry name" value="PHOSPHORIBOSYLFORMYLGLYCINAMIDINE SYNTHASE SUBUNIT PURS"/>
    <property type="match status" value="1"/>
</dbReference>
<dbReference type="PANTHER" id="PTHR34696:SF1">
    <property type="entry name" value="PHOSPHORIBOSYLFORMYLGLYCINAMIDINE SYNTHASE SUBUNIT PURS"/>
    <property type="match status" value="1"/>
</dbReference>
<dbReference type="Pfam" id="PF02700">
    <property type="entry name" value="PurS"/>
    <property type="match status" value="1"/>
</dbReference>
<dbReference type="SUPFAM" id="SSF82697">
    <property type="entry name" value="PurS-like"/>
    <property type="match status" value="1"/>
</dbReference>
<sequence>MARAVVHVMLRAEILDPQGQAIAGALGRLGHTGISDVRQGKRFELEIDDTVDDSELAMIAESLLANTVIEDWTITRESQ</sequence>
<feature type="chain" id="PRO_0000100396" description="Phosphoribosylformylglycinamidine synthase subunit PurS">
    <location>
        <begin position="1"/>
        <end position="79"/>
    </location>
</feature>
<accession>O05755</accession>
<protein>
    <recommendedName>
        <fullName evidence="2">Phosphoribosylformylglycinamidine synthase subunit PurS</fullName>
        <shortName evidence="2">FGAM synthase</shortName>
        <ecNumber evidence="2">6.3.5.3</ecNumber>
    </recommendedName>
    <alternativeName>
        <fullName evidence="2">Formylglycinamide ribonucleotide amidotransferase subunit III</fullName>
        <shortName evidence="2">FGAR amidotransferase III</shortName>
        <shortName evidence="2">FGAR-AT III</shortName>
    </alternativeName>
    <alternativeName>
        <fullName evidence="2">Phosphoribosylformylglycinamidine synthase subunit III</fullName>
    </alternativeName>
</protein>
<evidence type="ECO:0000250" key="1"/>
<evidence type="ECO:0000255" key="2">
    <source>
        <dbReference type="HAMAP-Rule" id="MF_01926"/>
    </source>
</evidence>
<gene>
    <name type="ordered locus">ML2219.1</name>
    <name type="ORF">ML2219A</name>
    <name type="ORF">MLCB5.24</name>
</gene>
<reference key="1">
    <citation type="journal article" date="2001" name="Nature">
        <title>Massive gene decay in the leprosy bacillus.</title>
        <authorList>
            <person name="Cole S.T."/>
            <person name="Eiglmeier K."/>
            <person name="Parkhill J."/>
            <person name="James K.D."/>
            <person name="Thomson N.R."/>
            <person name="Wheeler P.R."/>
            <person name="Honore N."/>
            <person name="Garnier T."/>
            <person name="Churcher C.M."/>
            <person name="Harris D.E."/>
            <person name="Mungall K.L."/>
            <person name="Basham D."/>
            <person name="Brown D."/>
            <person name="Chillingworth T."/>
            <person name="Connor R."/>
            <person name="Davies R.M."/>
            <person name="Devlin K."/>
            <person name="Duthoy S."/>
            <person name="Feltwell T."/>
            <person name="Fraser A."/>
            <person name="Hamlin N."/>
            <person name="Holroyd S."/>
            <person name="Hornsby T."/>
            <person name="Jagels K."/>
            <person name="Lacroix C."/>
            <person name="Maclean J."/>
            <person name="Moule S."/>
            <person name="Murphy L.D."/>
            <person name="Oliver K."/>
            <person name="Quail M.A."/>
            <person name="Rajandream M.A."/>
            <person name="Rutherford K.M."/>
            <person name="Rutter S."/>
            <person name="Seeger K."/>
            <person name="Simon S."/>
            <person name="Simmonds M."/>
            <person name="Skelton J."/>
            <person name="Squares R."/>
            <person name="Squares S."/>
            <person name="Stevens K."/>
            <person name="Taylor K."/>
            <person name="Whitehead S."/>
            <person name="Woodward J.R."/>
            <person name="Barrell B.G."/>
        </authorList>
    </citation>
    <scope>NUCLEOTIDE SEQUENCE [LARGE SCALE GENOMIC DNA]</scope>
    <source>
        <strain>TN</strain>
    </source>
</reference>
<name>PURS_MYCLE</name>
<organism>
    <name type="scientific">Mycobacterium leprae (strain TN)</name>
    <dbReference type="NCBI Taxonomy" id="272631"/>
    <lineage>
        <taxon>Bacteria</taxon>
        <taxon>Bacillati</taxon>
        <taxon>Actinomycetota</taxon>
        <taxon>Actinomycetes</taxon>
        <taxon>Mycobacteriales</taxon>
        <taxon>Mycobacteriaceae</taxon>
        <taxon>Mycobacterium</taxon>
    </lineage>
</organism>
<proteinExistence type="inferred from homology"/>